<sequence>MDLFEYQAKELFAKHNVPTTPGRVTESAEDAKAIAEEIGKPVMVKAQVKVGGRGKAGGVKYAATPEDALTHAQNILGLDIKGHIVKKLLVAEASDIAEEYYISFLLDRANRTYLAMCSVEGGMEIEEVAATKPERLAKVPVDAVKGVDEAFAREIAEKGHLPAEVLDAAAVTIAKLWEVFVKEDATLVEVNPLVRTPDDQILALDGKVTLDANADFRQPGHAEFEDKDATDPLELKAKENDLNYVKLDGAVGIIGNGAGLVMSTLDVVAYAGEKHGGVKPANFLDIGGGASAEVMAAGLDVILNDSQVKSVFVNVFGGITACDAVANGIVKALEILGDEANKPLVVRLDGNNVEEGRRILSEANHPLVIQADTMDSGADKAAELANK</sequence>
<protein>
    <recommendedName>
        <fullName evidence="1">Succinate--CoA ligase [ADP-forming] subunit beta</fullName>
        <ecNumber evidence="1">6.2.1.5</ecNumber>
    </recommendedName>
    <alternativeName>
        <fullName evidence="1">Succinyl-CoA synthetase subunit beta</fullName>
        <shortName evidence="1">SCS-beta</shortName>
    </alternativeName>
</protein>
<name>SUCC_MYCVP</name>
<comment type="function">
    <text evidence="1">Succinyl-CoA synthetase functions in the citric acid cycle (TCA), coupling the hydrolysis of succinyl-CoA to the synthesis of either ATP or GTP and thus represents the only step of substrate-level phosphorylation in the TCA. The beta subunit provides nucleotide specificity of the enzyme and binds the substrate succinate, while the binding sites for coenzyme A and phosphate are found in the alpha subunit.</text>
</comment>
<comment type="catalytic activity">
    <reaction evidence="1">
        <text>succinate + ATP + CoA = succinyl-CoA + ADP + phosphate</text>
        <dbReference type="Rhea" id="RHEA:17661"/>
        <dbReference type="ChEBI" id="CHEBI:30031"/>
        <dbReference type="ChEBI" id="CHEBI:30616"/>
        <dbReference type="ChEBI" id="CHEBI:43474"/>
        <dbReference type="ChEBI" id="CHEBI:57287"/>
        <dbReference type="ChEBI" id="CHEBI:57292"/>
        <dbReference type="ChEBI" id="CHEBI:456216"/>
        <dbReference type="EC" id="6.2.1.5"/>
    </reaction>
    <physiologicalReaction direction="right-to-left" evidence="1">
        <dbReference type="Rhea" id="RHEA:17663"/>
    </physiologicalReaction>
</comment>
<comment type="catalytic activity">
    <reaction evidence="1">
        <text>GTP + succinate + CoA = succinyl-CoA + GDP + phosphate</text>
        <dbReference type="Rhea" id="RHEA:22120"/>
        <dbReference type="ChEBI" id="CHEBI:30031"/>
        <dbReference type="ChEBI" id="CHEBI:37565"/>
        <dbReference type="ChEBI" id="CHEBI:43474"/>
        <dbReference type="ChEBI" id="CHEBI:57287"/>
        <dbReference type="ChEBI" id="CHEBI:57292"/>
        <dbReference type="ChEBI" id="CHEBI:58189"/>
    </reaction>
    <physiologicalReaction direction="right-to-left" evidence="1">
        <dbReference type="Rhea" id="RHEA:22122"/>
    </physiologicalReaction>
</comment>
<comment type="cofactor">
    <cofactor evidence="1">
        <name>Mg(2+)</name>
        <dbReference type="ChEBI" id="CHEBI:18420"/>
    </cofactor>
    <text evidence="1">Binds 1 Mg(2+) ion per subunit.</text>
</comment>
<comment type="pathway">
    <text evidence="1">Carbohydrate metabolism; tricarboxylic acid cycle; succinate from succinyl-CoA (ligase route): step 1/1.</text>
</comment>
<comment type="subunit">
    <text evidence="1">Heterotetramer of two alpha and two beta subunits.</text>
</comment>
<comment type="similarity">
    <text evidence="1">Belongs to the succinate/malate CoA ligase beta subunit family.</text>
</comment>
<evidence type="ECO:0000255" key="1">
    <source>
        <dbReference type="HAMAP-Rule" id="MF_00558"/>
    </source>
</evidence>
<feature type="chain" id="PRO_1000082134" description="Succinate--CoA ligase [ADP-forming] subunit beta">
    <location>
        <begin position="1"/>
        <end position="387"/>
    </location>
</feature>
<feature type="domain" description="ATP-grasp" evidence="1">
    <location>
        <begin position="9"/>
        <end position="236"/>
    </location>
</feature>
<feature type="binding site" evidence="1">
    <location>
        <position position="45"/>
    </location>
    <ligand>
        <name>ATP</name>
        <dbReference type="ChEBI" id="CHEBI:30616"/>
    </ligand>
</feature>
<feature type="binding site" evidence="1">
    <location>
        <begin position="52"/>
        <end position="54"/>
    </location>
    <ligand>
        <name>ATP</name>
        <dbReference type="ChEBI" id="CHEBI:30616"/>
    </ligand>
</feature>
<feature type="binding site" evidence="1">
    <location>
        <position position="94"/>
    </location>
    <ligand>
        <name>ATP</name>
        <dbReference type="ChEBI" id="CHEBI:30616"/>
    </ligand>
</feature>
<feature type="binding site" evidence="1">
    <location>
        <position position="99"/>
    </location>
    <ligand>
        <name>ATP</name>
        <dbReference type="ChEBI" id="CHEBI:30616"/>
    </ligand>
</feature>
<feature type="binding site" evidence="1">
    <location>
        <position position="191"/>
    </location>
    <ligand>
        <name>Mg(2+)</name>
        <dbReference type="ChEBI" id="CHEBI:18420"/>
    </ligand>
</feature>
<feature type="binding site" evidence="1">
    <location>
        <position position="205"/>
    </location>
    <ligand>
        <name>Mg(2+)</name>
        <dbReference type="ChEBI" id="CHEBI:18420"/>
    </ligand>
</feature>
<feature type="binding site" evidence="1">
    <location>
        <position position="256"/>
    </location>
    <ligand>
        <name>substrate</name>
        <note>ligand shared with subunit alpha</note>
    </ligand>
</feature>
<feature type="binding site" evidence="1">
    <location>
        <begin position="318"/>
        <end position="320"/>
    </location>
    <ligand>
        <name>substrate</name>
        <note>ligand shared with subunit alpha</note>
    </ligand>
</feature>
<keyword id="KW-0067">ATP-binding</keyword>
<keyword id="KW-0436">Ligase</keyword>
<keyword id="KW-0460">Magnesium</keyword>
<keyword id="KW-0479">Metal-binding</keyword>
<keyword id="KW-0547">Nucleotide-binding</keyword>
<keyword id="KW-0816">Tricarboxylic acid cycle</keyword>
<proteinExistence type="inferred from homology"/>
<reference key="1">
    <citation type="submission" date="2006-12" db="EMBL/GenBank/DDBJ databases">
        <title>Complete sequence of Mycobacterium vanbaalenii PYR-1.</title>
        <authorList>
            <consortium name="US DOE Joint Genome Institute"/>
            <person name="Copeland A."/>
            <person name="Lucas S."/>
            <person name="Lapidus A."/>
            <person name="Barry K."/>
            <person name="Detter J.C."/>
            <person name="Glavina del Rio T."/>
            <person name="Hammon N."/>
            <person name="Israni S."/>
            <person name="Dalin E."/>
            <person name="Tice H."/>
            <person name="Pitluck S."/>
            <person name="Singan V."/>
            <person name="Schmutz J."/>
            <person name="Larimer F."/>
            <person name="Land M."/>
            <person name="Hauser L."/>
            <person name="Kyrpides N."/>
            <person name="Anderson I.J."/>
            <person name="Miller C."/>
            <person name="Richardson P."/>
        </authorList>
    </citation>
    <scope>NUCLEOTIDE SEQUENCE [LARGE SCALE GENOMIC DNA]</scope>
    <source>
        <strain>DSM 7251 / JCM 13017 / BCRC 16820 / KCTC 9966 / NRRL B-24157 / PYR-1</strain>
    </source>
</reference>
<accession>A1TEP3</accession>
<organism>
    <name type="scientific">Mycolicibacterium vanbaalenii (strain DSM 7251 / JCM 13017 / BCRC 16820 / KCTC 9966 / NRRL B-24157 / PYR-1)</name>
    <name type="common">Mycobacterium vanbaalenii</name>
    <dbReference type="NCBI Taxonomy" id="350058"/>
    <lineage>
        <taxon>Bacteria</taxon>
        <taxon>Bacillati</taxon>
        <taxon>Actinomycetota</taxon>
        <taxon>Actinomycetes</taxon>
        <taxon>Mycobacteriales</taxon>
        <taxon>Mycobacteriaceae</taxon>
        <taxon>Mycolicibacterium</taxon>
    </lineage>
</organism>
<dbReference type="EC" id="6.2.1.5" evidence="1"/>
<dbReference type="EMBL" id="CP000511">
    <property type="protein sequence ID" value="ABM15643.1"/>
    <property type="molecule type" value="Genomic_DNA"/>
</dbReference>
<dbReference type="RefSeq" id="WP_011782016.1">
    <property type="nucleotide sequence ID" value="NZ_JACKSD010000270.1"/>
</dbReference>
<dbReference type="SMR" id="A1TEP3"/>
<dbReference type="STRING" id="350058.Mvan_4870"/>
<dbReference type="KEGG" id="mva:Mvan_4870"/>
<dbReference type="eggNOG" id="COG0045">
    <property type="taxonomic scope" value="Bacteria"/>
</dbReference>
<dbReference type="HOGENOM" id="CLU_037430_0_2_11"/>
<dbReference type="UniPathway" id="UPA00223">
    <property type="reaction ID" value="UER00999"/>
</dbReference>
<dbReference type="Proteomes" id="UP000009159">
    <property type="component" value="Chromosome"/>
</dbReference>
<dbReference type="GO" id="GO:0005829">
    <property type="term" value="C:cytosol"/>
    <property type="evidence" value="ECO:0007669"/>
    <property type="project" value="TreeGrafter"/>
</dbReference>
<dbReference type="GO" id="GO:0042709">
    <property type="term" value="C:succinate-CoA ligase complex"/>
    <property type="evidence" value="ECO:0007669"/>
    <property type="project" value="TreeGrafter"/>
</dbReference>
<dbReference type="GO" id="GO:0005524">
    <property type="term" value="F:ATP binding"/>
    <property type="evidence" value="ECO:0007669"/>
    <property type="project" value="UniProtKB-UniRule"/>
</dbReference>
<dbReference type="GO" id="GO:0000287">
    <property type="term" value="F:magnesium ion binding"/>
    <property type="evidence" value="ECO:0007669"/>
    <property type="project" value="UniProtKB-UniRule"/>
</dbReference>
<dbReference type="GO" id="GO:0004775">
    <property type="term" value="F:succinate-CoA ligase (ADP-forming) activity"/>
    <property type="evidence" value="ECO:0007669"/>
    <property type="project" value="UniProtKB-UniRule"/>
</dbReference>
<dbReference type="GO" id="GO:0004776">
    <property type="term" value="F:succinate-CoA ligase (GDP-forming) activity"/>
    <property type="evidence" value="ECO:0007669"/>
    <property type="project" value="RHEA"/>
</dbReference>
<dbReference type="GO" id="GO:0006104">
    <property type="term" value="P:succinyl-CoA metabolic process"/>
    <property type="evidence" value="ECO:0007669"/>
    <property type="project" value="TreeGrafter"/>
</dbReference>
<dbReference type="GO" id="GO:0006099">
    <property type="term" value="P:tricarboxylic acid cycle"/>
    <property type="evidence" value="ECO:0007669"/>
    <property type="project" value="UniProtKB-UniRule"/>
</dbReference>
<dbReference type="FunFam" id="3.30.1490.20:FF:000014">
    <property type="entry name" value="Succinate--CoA ligase [ADP-forming] subunit beta"/>
    <property type="match status" value="1"/>
</dbReference>
<dbReference type="FunFam" id="3.30.470.20:FF:000002">
    <property type="entry name" value="Succinate--CoA ligase [ADP-forming] subunit beta"/>
    <property type="match status" value="1"/>
</dbReference>
<dbReference type="FunFam" id="3.40.50.261:FF:000007">
    <property type="entry name" value="Succinate--CoA ligase [ADP-forming] subunit beta"/>
    <property type="match status" value="1"/>
</dbReference>
<dbReference type="Gene3D" id="3.30.1490.20">
    <property type="entry name" value="ATP-grasp fold, A domain"/>
    <property type="match status" value="1"/>
</dbReference>
<dbReference type="Gene3D" id="3.30.470.20">
    <property type="entry name" value="ATP-grasp fold, B domain"/>
    <property type="match status" value="1"/>
</dbReference>
<dbReference type="Gene3D" id="3.40.50.261">
    <property type="entry name" value="Succinyl-CoA synthetase domains"/>
    <property type="match status" value="1"/>
</dbReference>
<dbReference type="HAMAP" id="MF_00558">
    <property type="entry name" value="Succ_CoA_beta"/>
    <property type="match status" value="1"/>
</dbReference>
<dbReference type="InterPro" id="IPR011761">
    <property type="entry name" value="ATP-grasp"/>
</dbReference>
<dbReference type="InterPro" id="IPR013650">
    <property type="entry name" value="ATP-grasp_succ-CoA_synth-type"/>
</dbReference>
<dbReference type="InterPro" id="IPR013815">
    <property type="entry name" value="ATP_grasp_subdomain_1"/>
</dbReference>
<dbReference type="InterPro" id="IPR017866">
    <property type="entry name" value="Succ-CoA_synthase_bsu_CS"/>
</dbReference>
<dbReference type="InterPro" id="IPR005811">
    <property type="entry name" value="SUCC_ACL_C"/>
</dbReference>
<dbReference type="InterPro" id="IPR005809">
    <property type="entry name" value="Succ_CoA_ligase-like_bsu"/>
</dbReference>
<dbReference type="InterPro" id="IPR016102">
    <property type="entry name" value="Succinyl-CoA_synth-like"/>
</dbReference>
<dbReference type="NCBIfam" id="NF001913">
    <property type="entry name" value="PRK00696.1"/>
    <property type="match status" value="1"/>
</dbReference>
<dbReference type="NCBIfam" id="TIGR01016">
    <property type="entry name" value="sucCoAbeta"/>
    <property type="match status" value="1"/>
</dbReference>
<dbReference type="PANTHER" id="PTHR11815:SF10">
    <property type="entry name" value="SUCCINATE--COA LIGASE [GDP-FORMING] SUBUNIT BETA, MITOCHONDRIAL"/>
    <property type="match status" value="1"/>
</dbReference>
<dbReference type="PANTHER" id="PTHR11815">
    <property type="entry name" value="SUCCINYL-COA SYNTHETASE BETA CHAIN"/>
    <property type="match status" value="1"/>
</dbReference>
<dbReference type="Pfam" id="PF08442">
    <property type="entry name" value="ATP-grasp_2"/>
    <property type="match status" value="1"/>
</dbReference>
<dbReference type="Pfam" id="PF00549">
    <property type="entry name" value="Ligase_CoA"/>
    <property type="match status" value="1"/>
</dbReference>
<dbReference type="PIRSF" id="PIRSF001554">
    <property type="entry name" value="SucCS_beta"/>
    <property type="match status" value="1"/>
</dbReference>
<dbReference type="SUPFAM" id="SSF56059">
    <property type="entry name" value="Glutathione synthetase ATP-binding domain-like"/>
    <property type="match status" value="1"/>
</dbReference>
<dbReference type="SUPFAM" id="SSF52210">
    <property type="entry name" value="Succinyl-CoA synthetase domains"/>
    <property type="match status" value="1"/>
</dbReference>
<dbReference type="PROSITE" id="PS50975">
    <property type="entry name" value="ATP_GRASP"/>
    <property type="match status" value="1"/>
</dbReference>
<dbReference type="PROSITE" id="PS01217">
    <property type="entry name" value="SUCCINYL_COA_LIG_3"/>
    <property type="match status" value="1"/>
</dbReference>
<gene>
    <name evidence="1" type="primary">sucC</name>
    <name type="ordered locus">Mvan_4870</name>
</gene>